<gene>
    <name evidence="1" type="primary">kdpC</name>
    <name type="ordered locus">Ta1308</name>
</gene>
<sequence length="205" mass="22894">MKSYLKALVFAVLFLFILGFVYPTVTSLITEHALPFQSEGQPVEIDGHIYGSYLLAEAFNSSFFFHPRPSAIDYNLSESGSYDYSLGNPAMLNLTEKYLHRFLSENPGVNISEIPYAMISYSGSGLDPGIPLQGAIIQIPRISIAIHNITNLSVSDLYSYLYNLVNSTKTQNFPFFGSYYVNVVRLNVDIVEFLLKGGYISQSQI</sequence>
<feature type="chain" id="PRO_0000197026" description="Potassium-transporting ATPase KdpC subunit">
    <location>
        <begin position="1"/>
        <end position="205"/>
    </location>
</feature>
<feature type="transmembrane region" description="Helical" evidence="1">
    <location>
        <begin position="9"/>
        <end position="29"/>
    </location>
</feature>
<keyword id="KW-0067">ATP-binding</keyword>
<keyword id="KW-1003">Cell membrane</keyword>
<keyword id="KW-0406">Ion transport</keyword>
<keyword id="KW-0472">Membrane</keyword>
<keyword id="KW-0547">Nucleotide-binding</keyword>
<keyword id="KW-0630">Potassium</keyword>
<keyword id="KW-0633">Potassium transport</keyword>
<keyword id="KW-1185">Reference proteome</keyword>
<keyword id="KW-0812">Transmembrane</keyword>
<keyword id="KW-1133">Transmembrane helix</keyword>
<keyword id="KW-0813">Transport</keyword>
<name>KDPC_THEAC</name>
<evidence type="ECO:0000255" key="1">
    <source>
        <dbReference type="HAMAP-Rule" id="MF_00276"/>
    </source>
</evidence>
<evidence type="ECO:0000305" key="2"/>
<accession>P57688</accession>
<proteinExistence type="inferred from homology"/>
<organism>
    <name type="scientific">Thermoplasma acidophilum (strain ATCC 25905 / DSM 1728 / JCM 9062 / NBRC 15155 / AMRC-C165)</name>
    <dbReference type="NCBI Taxonomy" id="273075"/>
    <lineage>
        <taxon>Archaea</taxon>
        <taxon>Methanobacteriati</taxon>
        <taxon>Thermoplasmatota</taxon>
        <taxon>Thermoplasmata</taxon>
        <taxon>Thermoplasmatales</taxon>
        <taxon>Thermoplasmataceae</taxon>
        <taxon>Thermoplasma</taxon>
    </lineage>
</organism>
<dbReference type="EMBL" id="AL445067">
    <property type="protein sequence ID" value="CAC12429.1"/>
    <property type="status" value="ALT_INIT"/>
    <property type="molecule type" value="Genomic_DNA"/>
</dbReference>
<dbReference type="RefSeq" id="WP_241761829.1">
    <property type="nucleotide sequence ID" value="NC_002578.1"/>
</dbReference>
<dbReference type="SMR" id="P57688"/>
<dbReference type="STRING" id="273075.gene:9572531"/>
<dbReference type="PaxDb" id="273075-Ta1308m"/>
<dbReference type="EnsemblBacteria" id="CAC12429">
    <property type="protein sequence ID" value="CAC12429"/>
    <property type="gene ID" value="CAC12429"/>
</dbReference>
<dbReference type="KEGG" id="tac:Ta1308"/>
<dbReference type="eggNOG" id="arCOG04805">
    <property type="taxonomic scope" value="Archaea"/>
</dbReference>
<dbReference type="HOGENOM" id="CLU_077094_1_0_2"/>
<dbReference type="InParanoid" id="P57688"/>
<dbReference type="Proteomes" id="UP000001024">
    <property type="component" value="Chromosome"/>
</dbReference>
<dbReference type="GO" id="GO:0005886">
    <property type="term" value="C:plasma membrane"/>
    <property type="evidence" value="ECO:0007669"/>
    <property type="project" value="UniProtKB-SubCell"/>
</dbReference>
<dbReference type="GO" id="GO:0005524">
    <property type="term" value="F:ATP binding"/>
    <property type="evidence" value="ECO:0007669"/>
    <property type="project" value="UniProtKB-UniRule"/>
</dbReference>
<dbReference type="GO" id="GO:0008556">
    <property type="term" value="F:P-type potassium transmembrane transporter activity"/>
    <property type="evidence" value="ECO:0007669"/>
    <property type="project" value="InterPro"/>
</dbReference>
<dbReference type="HAMAP" id="MF_00276">
    <property type="entry name" value="KdpC"/>
    <property type="match status" value="1"/>
</dbReference>
<dbReference type="InterPro" id="IPR003820">
    <property type="entry name" value="KdpC"/>
</dbReference>
<dbReference type="NCBIfam" id="NF001454">
    <property type="entry name" value="PRK00315.1"/>
    <property type="match status" value="1"/>
</dbReference>
<dbReference type="PANTHER" id="PTHR30042">
    <property type="entry name" value="POTASSIUM-TRANSPORTING ATPASE C CHAIN"/>
    <property type="match status" value="1"/>
</dbReference>
<dbReference type="PANTHER" id="PTHR30042:SF2">
    <property type="entry name" value="POTASSIUM-TRANSPORTING ATPASE KDPC SUBUNIT"/>
    <property type="match status" value="1"/>
</dbReference>
<dbReference type="Pfam" id="PF02669">
    <property type="entry name" value="KdpC"/>
    <property type="match status" value="1"/>
</dbReference>
<dbReference type="PIRSF" id="PIRSF001296">
    <property type="entry name" value="K_ATPase_KdpC"/>
    <property type="match status" value="1"/>
</dbReference>
<comment type="function">
    <text evidence="1">Part of the high-affinity ATP-driven potassium transport (or Kdp) system, which catalyzes the hydrolysis of ATP coupled with the electrogenic transport of potassium into the cytoplasm. This subunit acts as a catalytic chaperone that increases the ATP-binding affinity of the ATP-hydrolyzing subunit KdpB by the formation of a transient KdpB/KdpC/ATP ternary complex.</text>
</comment>
<comment type="subunit">
    <text evidence="1">The system is composed of three essential subunits: KdpA, KdpB and KdpC.</text>
</comment>
<comment type="subcellular location">
    <subcellularLocation>
        <location evidence="1">Cell membrane</location>
        <topology evidence="1">Single-pass membrane protein</topology>
    </subcellularLocation>
</comment>
<comment type="similarity">
    <text evidence="1">Belongs to the KdpC family.</text>
</comment>
<comment type="sequence caution" evidence="2">
    <conflict type="erroneous initiation">
        <sequence resource="EMBL-CDS" id="CAC12429"/>
    </conflict>
</comment>
<protein>
    <recommendedName>
        <fullName evidence="1">Potassium-transporting ATPase KdpC subunit</fullName>
    </recommendedName>
    <alternativeName>
        <fullName evidence="1">ATP phosphohydrolase [potassium-transporting] C chain</fullName>
    </alternativeName>
    <alternativeName>
        <fullName evidence="1">Potassium-binding and translocating subunit C</fullName>
    </alternativeName>
    <alternativeName>
        <fullName evidence="1">Potassium-translocating ATPase C chain</fullName>
    </alternativeName>
</protein>
<reference key="1">
    <citation type="journal article" date="2000" name="Nature">
        <title>The genome sequence of the thermoacidophilic scavenger Thermoplasma acidophilum.</title>
        <authorList>
            <person name="Ruepp A."/>
            <person name="Graml W."/>
            <person name="Santos-Martinez M.-L."/>
            <person name="Koretke K.K."/>
            <person name="Volker C."/>
            <person name="Mewes H.-W."/>
            <person name="Frishman D."/>
            <person name="Stocker S."/>
            <person name="Lupas A.N."/>
            <person name="Baumeister W."/>
        </authorList>
    </citation>
    <scope>NUCLEOTIDE SEQUENCE [LARGE SCALE GENOMIC DNA]</scope>
    <source>
        <strain>ATCC 25905 / DSM 1728 / JCM 9062 / NBRC 15155 / AMRC-C165</strain>
    </source>
</reference>